<organism>
    <name type="scientific">Methylorubrum populi (strain ATCC BAA-705 / NCIMB 13946 / BJ001)</name>
    <name type="common">Methylobacterium populi</name>
    <dbReference type="NCBI Taxonomy" id="441620"/>
    <lineage>
        <taxon>Bacteria</taxon>
        <taxon>Pseudomonadati</taxon>
        <taxon>Pseudomonadota</taxon>
        <taxon>Alphaproteobacteria</taxon>
        <taxon>Hyphomicrobiales</taxon>
        <taxon>Methylobacteriaceae</taxon>
        <taxon>Methylorubrum</taxon>
    </lineage>
</organism>
<comment type="function">
    <text evidence="1">This protein binds specifically to 23S rRNA; its binding is stimulated by other ribosomal proteins, e.g. L4, L17, and L20. It is important during the early stages of 50S assembly. It makes multiple contacts with different domains of the 23S rRNA in the assembled 50S subunit and ribosome (By similarity).</text>
</comment>
<comment type="function">
    <text evidence="1">The globular domain of the protein is located near the polypeptide exit tunnel on the outside of the subunit, while an extended beta-hairpin is found that lines the wall of the exit tunnel in the center of the 70S ribosome.</text>
</comment>
<comment type="subunit">
    <text evidence="1">Part of the 50S ribosomal subunit.</text>
</comment>
<comment type="similarity">
    <text evidence="1">Belongs to the universal ribosomal protein uL22 family.</text>
</comment>
<dbReference type="EMBL" id="CP001029">
    <property type="protein sequence ID" value="ACB80290.1"/>
    <property type="molecule type" value="Genomic_DNA"/>
</dbReference>
<dbReference type="RefSeq" id="WP_009865531.1">
    <property type="nucleotide sequence ID" value="NC_010725.1"/>
</dbReference>
<dbReference type="SMR" id="B1Z757"/>
<dbReference type="STRING" id="441620.Mpop_2128"/>
<dbReference type="KEGG" id="mpo:Mpop_2128"/>
<dbReference type="eggNOG" id="COG0091">
    <property type="taxonomic scope" value="Bacteria"/>
</dbReference>
<dbReference type="HOGENOM" id="CLU_083987_3_0_5"/>
<dbReference type="OrthoDB" id="9805969at2"/>
<dbReference type="Proteomes" id="UP000007136">
    <property type="component" value="Chromosome"/>
</dbReference>
<dbReference type="GO" id="GO:0022625">
    <property type="term" value="C:cytosolic large ribosomal subunit"/>
    <property type="evidence" value="ECO:0007669"/>
    <property type="project" value="TreeGrafter"/>
</dbReference>
<dbReference type="GO" id="GO:0019843">
    <property type="term" value="F:rRNA binding"/>
    <property type="evidence" value="ECO:0007669"/>
    <property type="project" value="UniProtKB-UniRule"/>
</dbReference>
<dbReference type="GO" id="GO:0003735">
    <property type="term" value="F:structural constituent of ribosome"/>
    <property type="evidence" value="ECO:0007669"/>
    <property type="project" value="InterPro"/>
</dbReference>
<dbReference type="GO" id="GO:0006412">
    <property type="term" value="P:translation"/>
    <property type="evidence" value="ECO:0007669"/>
    <property type="project" value="UniProtKB-UniRule"/>
</dbReference>
<dbReference type="CDD" id="cd00336">
    <property type="entry name" value="Ribosomal_L22"/>
    <property type="match status" value="1"/>
</dbReference>
<dbReference type="Gene3D" id="3.90.470.10">
    <property type="entry name" value="Ribosomal protein L22/L17"/>
    <property type="match status" value="1"/>
</dbReference>
<dbReference type="HAMAP" id="MF_01331_B">
    <property type="entry name" value="Ribosomal_uL22_B"/>
    <property type="match status" value="1"/>
</dbReference>
<dbReference type="InterPro" id="IPR001063">
    <property type="entry name" value="Ribosomal_uL22"/>
</dbReference>
<dbReference type="InterPro" id="IPR005727">
    <property type="entry name" value="Ribosomal_uL22_bac/chlpt-type"/>
</dbReference>
<dbReference type="InterPro" id="IPR047867">
    <property type="entry name" value="Ribosomal_uL22_bac/org-type"/>
</dbReference>
<dbReference type="InterPro" id="IPR018260">
    <property type="entry name" value="Ribosomal_uL22_CS"/>
</dbReference>
<dbReference type="InterPro" id="IPR036394">
    <property type="entry name" value="Ribosomal_uL22_sf"/>
</dbReference>
<dbReference type="NCBIfam" id="TIGR01044">
    <property type="entry name" value="rplV_bact"/>
    <property type="match status" value="1"/>
</dbReference>
<dbReference type="PANTHER" id="PTHR13501">
    <property type="entry name" value="CHLOROPLAST 50S RIBOSOMAL PROTEIN L22-RELATED"/>
    <property type="match status" value="1"/>
</dbReference>
<dbReference type="PANTHER" id="PTHR13501:SF8">
    <property type="entry name" value="LARGE RIBOSOMAL SUBUNIT PROTEIN UL22M"/>
    <property type="match status" value="1"/>
</dbReference>
<dbReference type="Pfam" id="PF00237">
    <property type="entry name" value="Ribosomal_L22"/>
    <property type="match status" value="1"/>
</dbReference>
<dbReference type="SUPFAM" id="SSF54843">
    <property type="entry name" value="Ribosomal protein L22"/>
    <property type="match status" value="1"/>
</dbReference>
<dbReference type="PROSITE" id="PS00464">
    <property type="entry name" value="RIBOSOMAL_L22"/>
    <property type="match status" value="1"/>
</dbReference>
<accession>B1Z757</accession>
<keyword id="KW-0687">Ribonucleoprotein</keyword>
<keyword id="KW-0689">Ribosomal protein</keyword>
<keyword id="KW-0694">RNA-binding</keyword>
<keyword id="KW-0699">rRNA-binding</keyword>
<evidence type="ECO:0000255" key="1">
    <source>
        <dbReference type="HAMAP-Rule" id="MF_01331"/>
    </source>
</evidence>
<evidence type="ECO:0000305" key="2"/>
<protein>
    <recommendedName>
        <fullName evidence="1">Large ribosomal subunit protein uL22</fullName>
    </recommendedName>
    <alternativeName>
        <fullName evidence="2">50S ribosomal protein L22</fullName>
    </alternativeName>
</protein>
<proteinExistence type="inferred from homology"/>
<sequence length="127" mass="13934">MGKPATPRALPENEAKAVARMLRVSPQKLNLVAALIRGKKVDTALADLEFSRKRIARDVKKCLESAIANAENNHDLDVDDLVVSQAFVGKALVLKRFHARARGRGARILKPFSNLTIVVREVRAEAA</sequence>
<reference key="1">
    <citation type="submission" date="2008-04" db="EMBL/GenBank/DDBJ databases">
        <title>Complete sequence of chromosome of Methylobacterium populi BJ001.</title>
        <authorList>
            <consortium name="US DOE Joint Genome Institute"/>
            <person name="Copeland A."/>
            <person name="Lucas S."/>
            <person name="Lapidus A."/>
            <person name="Glavina del Rio T."/>
            <person name="Dalin E."/>
            <person name="Tice H."/>
            <person name="Bruce D."/>
            <person name="Goodwin L."/>
            <person name="Pitluck S."/>
            <person name="Chertkov O."/>
            <person name="Brettin T."/>
            <person name="Detter J.C."/>
            <person name="Han C."/>
            <person name="Kuske C.R."/>
            <person name="Schmutz J."/>
            <person name="Larimer F."/>
            <person name="Land M."/>
            <person name="Hauser L."/>
            <person name="Kyrpides N."/>
            <person name="Mikhailova N."/>
            <person name="Marx C."/>
            <person name="Richardson P."/>
        </authorList>
    </citation>
    <scope>NUCLEOTIDE SEQUENCE [LARGE SCALE GENOMIC DNA]</scope>
    <source>
        <strain>ATCC BAA-705 / NCIMB 13946 / BJ001</strain>
    </source>
</reference>
<name>RL22_METPB</name>
<feature type="chain" id="PRO_1000142282" description="Large ribosomal subunit protein uL22">
    <location>
        <begin position="1"/>
        <end position="127"/>
    </location>
</feature>
<gene>
    <name evidence="1" type="primary">rplV</name>
    <name type="ordered locus">Mpop_2128</name>
</gene>